<accession>Q2Y7B6</accession>
<feature type="chain" id="PRO_0000303458" description="tRNA N6-adenosine threonylcarbamoyltransferase">
    <location>
        <begin position="1"/>
        <end position="347"/>
    </location>
</feature>
<feature type="binding site" evidence="1">
    <location>
        <position position="111"/>
    </location>
    <ligand>
        <name>Fe cation</name>
        <dbReference type="ChEBI" id="CHEBI:24875"/>
    </ligand>
</feature>
<feature type="binding site" evidence="1">
    <location>
        <position position="115"/>
    </location>
    <ligand>
        <name>Fe cation</name>
        <dbReference type="ChEBI" id="CHEBI:24875"/>
    </ligand>
</feature>
<feature type="binding site" evidence="1">
    <location>
        <begin position="134"/>
        <end position="138"/>
    </location>
    <ligand>
        <name>substrate</name>
    </ligand>
</feature>
<feature type="binding site" evidence="1">
    <location>
        <position position="167"/>
    </location>
    <ligand>
        <name>substrate</name>
    </ligand>
</feature>
<feature type="binding site" evidence="1">
    <location>
        <position position="180"/>
    </location>
    <ligand>
        <name>substrate</name>
    </ligand>
</feature>
<feature type="binding site" evidence="1">
    <location>
        <position position="276"/>
    </location>
    <ligand>
        <name>substrate</name>
    </ligand>
</feature>
<feature type="binding site" evidence="1">
    <location>
        <position position="304"/>
    </location>
    <ligand>
        <name>Fe cation</name>
        <dbReference type="ChEBI" id="CHEBI:24875"/>
    </ligand>
</feature>
<organism>
    <name type="scientific">Nitrosospira multiformis (strain ATCC 25196 / NCIMB 11849 / C 71)</name>
    <dbReference type="NCBI Taxonomy" id="323848"/>
    <lineage>
        <taxon>Bacteria</taxon>
        <taxon>Pseudomonadati</taxon>
        <taxon>Pseudomonadota</taxon>
        <taxon>Betaproteobacteria</taxon>
        <taxon>Nitrosomonadales</taxon>
        <taxon>Nitrosomonadaceae</taxon>
        <taxon>Nitrosospira</taxon>
    </lineage>
</organism>
<comment type="function">
    <text evidence="1">Required for the formation of a threonylcarbamoyl group on adenosine at position 37 (t(6)A37) in tRNAs that read codons beginning with adenine. Is involved in the transfer of the threonylcarbamoyl moiety of threonylcarbamoyl-AMP (TC-AMP) to the N6 group of A37, together with TsaE and TsaB. TsaD likely plays a direct catalytic role in this reaction.</text>
</comment>
<comment type="catalytic activity">
    <reaction evidence="1">
        <text>L-threonylcarbamoyladenylate + adenosine(37) in tRNA = N(6)-L-threonylcarbamoyladenosine(37) in tRNA + AMP + H(+)</text>
        <dbReference type="Rhea" id="RHEA:37059"/>
        <dbReference type="Rhea" id="RHEA-COMP:10162"/>
        <dbReference type="Rhea" id="RHEA-COMP:10163"/>
        <dbReference type="ChEBI" id="CHEBI:15378"/>
        <dbReference type="ChEBI" id="CHEBI:73682"/>
        <dbReference type="ChEBI" id="CHEBI:74411"/>
        <dbReference type="ChEBI" id="CHEBI:74418"/>
        <dbReference type="ChEBI" id="CHEBI:456215"/>
        <dbReference type="EC" id="2.3.1.234"/>
    </reaction>
</comment>
<comment type="cofactor">
    <cofactor evidence="1">
        <name>Fe(2+)</name>
        <dbReference type="ChEBI" id="CHEBI:29033"/>
    </cofactor>
    <text evidence="1">Binds 1 Fe(2+) ion per subunit.</text>
</comment>
<comment type="subcellular location">
    <subcellularLocation>
        <location evidence="1">Cytoplasm</location>
    </subcellularLocation>
</comment>
<comment type="similarity">
    <text evidence="1">Belongs to the KAE1 / TsaD family.</text>
</comment>
<reference key="1">
    <citation type="submission" date="2005-08" db="EMBL/GenBank/DDBJ databases">
        <title>Complete sequence of chromosome 1 of Nitrosospira multiformis ATCC 25196.</title>
        <authorList>
            <person name="Copeland A."/>
            <person name="Lucas S."/>
            <person name="Lapidus A."/>
            <person name="Barry K."/>
            <person name="Detter J.C."/>
            <person name="Glavina T."/>
            <person name="Hammon N."/>
            <person name="Israni S."/>
            <person name="Pitluck S."/>
            <person name="Chain P."/>
            <person name="Malfatti S."/>
            <person name="Shin M."/>
            <person name="Vergez L."/>
            <person name="Schmutz J."/>
            <person name="Larimer F."/>
            <person name="Land M."/>
            <person name="Hauser L."/>
            <person name="Kyrpides N."/>
            <person name="Lykidis A."/>
            <person name="Richardson P."/>
        </authorList>
    </citation>
    <scope>NUCLEOTIDE SEQUENCE [LARGE SCALE GENOMIC DNA]</scope>
    <source>
        <strain>ATCC 25196 / NCIMB 11849 / C 71</strain>
    </source>
</reference>
<dbReference type="EC" id="2.3.1.234" evidence="1"/>
<dbReference type="EMBL" id="CP000103">
    <property type="protein sequence ID" value="ABB75355.1"/>
    <property type="molecule type" value="Genomic_DNA"/>
</dbReference>
<dbReference type="RefSeq" id="WP_011381366.1">
    <property type="nucleotide sequence ID" value="NC_007614.1"/>
</dbReference>
<dbReference type="SMR" id="Q2Y7B6"/>
<dbReference type="STRING" id="323848.Nmul_A2061"/>
<dbReference type="KEGG" id="nmu:Nmul_A2061"/>
<dbReference type="eggNOG" id="COG0533">
    <property type="taxonomic scope" value="Bacteria"/>
</dbReference>
<dbReference type="HOGENOM" id="CLU_023208_0_2_4"/>
<dbReference type="OrthoDB" id="9806197at2"/>
<dbReference type="Proteomes" id="UP000002718">
    <property type="component" value="Chromosome"/>
</dbReference>
<dbReference type="GO" id="GO:0005737">
    <property type="term" value="C:cytoplasm"/>
    <property type="evidence" value="ECO:0007669"/>
    <property type="project" value="UniProtKB-SubCell"/>
</dbReference>
<dbReference type="GO" id="GO:0005506">
    <property type="term" value="F:iron ion binding"/>
    <property type="evidence" value="ECO:0007669"/>
    <property type="project" value="UniProtKB-UniRule"/>
</dbReference>
<dbReference type="GO" id="GO:0061711">
    <property type="term" value="F:N(6)-L-threonylcarbamoyladenine synthase activity"/>
    <property type="evidence" value="ECO:0007669"/>
    <property type="project" value="UniProtKB-EC"/>
</dbReference>
<dbReference type="GO" id="GO:0002949">
    <property type="term" value="P:tRNA threonylcarbamoyladenosine modification"/>
    <property type="evidence" value="ECO:0007669"/>
    <property type="project" value="UniProtKB-UniRule"/>
</dbReference>
<dbReference type="CDD" id="cd24133">
    <property type="entry name" value="ASKHA_NBD_TsaD_bac"/>
    <property type="match status" value="1"/>
</dbReference>
<dbReference type="FunFam" id="3.30.420.40:FF:000012">
    <property type="entry name" value="tRNA N6-adenosine threonylcarbamoyltransferase"/>
    <property type="match status" value="1"/>
</dbReference>
<dbReference type="FunFam" id="3.30.420.40:FF:000040">
    <property type="entry name" value="tRNA N6-adenosine threonylcarbamoyltransferase"/>
    <property type="match status" value="1"/>
</dbReference>
<dbReference type="Gene3D" id="3.30.420.40">
    <property type="match status" value="2"/>
</dbReference>
<dbReference type="HAMAP" id="MF_01445">
    <property type="entry name" value="TsaD"/>
    <property type="match status" value="1"/>
</dbReference>
<dbReference type="InterPro" id="IPR043129">
    <property type="entry name" value="ATPase_NBD"/>
</dbReference>
<dbReference type="InterPro" id="IPR000905">
    <property type="entry name" value="Gcp-like_dom"/>
</dbReference>
<dbReference type="InterPro" id="IPR017861">
    <property type="entry name" value="KAE1/TsaD"/>
</dbReference>
<dbReference type="InterPro" id="IPR022450">
    <property type="entry name" value="TsaD"/>
</dbReference>
<dbReference type="NCBIfam" id="TIGR00329">
    <property type="entry name" value="gcp_kae1"/>
    <property type="match status" value="1"/>
</dbReference>
<dbReference type="NCBIfam" id="TIGR03723">
    <property type="entry name" value="T6A_TsaD_YgjD"/>
    <property type="match status" value="1"/>
</dbReference>
<dbReference type="PANTHER" id="PTHR11735">
    <property type="entry name" value="TRNA N6-ADENOSINE THREONYLCARBAMOYLTRANSFERASE"/>
    <property type="match status" value="1"/>
</dbReference>
<dbReference type="PANTHER" id="PTHR11735:SF6">
    <property type="entry name" value="TRNA N6-ADENOSINE THREONYLCARBAMOYLTRANSFERASE, MITOCHONDRIAL"/>
    <property type="match status" value="1"/>
</dbReference>
<dbReference type="Pfam" id="PF00814">
    <property type="entry name" value="TsaD"/>
    <property type="match status" value="1"/>
</dbReference>
<dbReference type="PRINTS" id="PR00789">
    <property type="entry name" value="OSIALOPTASE"/>
</dbReference>
<dbReference type="SUPFAM" id="SSF53067">
    <property type="entry name" value="Actin-like ATPase domain"/>
    <property type="match status" value="2"/>
</dbReference>
<gene>
    <name evidence="1" type="primary">tsaD</name>
    <name type="synonym">gcp</name>
    <name type="ordered locus">Nmul_A2061</name>
</gene>
<protein>
    <recommendedName>
        <fullName evidence="1">tRNA N6-adenosine threonylcarbamoyltransferase</fullName>
        <ecNumber evidence="1">2.3.1.234</ecNumber>
    </recommendedName>
    <alternativeName>
        <fullName evidence="1">N6-L-threonylcarbamoyladenine synthase</fullName>
        <shortName evidence="1">t(6)A synthase</shortName>
    </alternativeName>
    <alternativeName>
        <fullName evidence="1">t(6)A37 threonylcarbamoyladenosine biosynthesis protein TsaD</fullName>
    </alternativeName>
    <alternativeName>
        <fullName evidence="1">tRNA threonylcarbamoyladenosine biosynthesis protein TsaD</fullName>
    </alternativeName>
</protein>
<sequence>MLVLGIETSCDETGVALYHTQQGLLSHALYSQIEMHGEYGGVVPELASRDHIRRLLPLIRQIFAEAGVSLRDLDAIAYTQGPGLAGALLVGASVAAALGFALKVPVLGIHHLEGHLLSPLLSDPAPAFPFVALLVSGGHTQLMEVTGLGQYRLLGETVDDAAGEAFDKTAKLLGLGYPGGPALSRLADEFTRSGQSARFELPRPMLHSGDFNFSFSGLKTAVLTLVNKHEMTPQIRGAIAQAFQEAAVEVLTEKSLAALAKTGLTQLVVAGGVGANRQLRSNLDRRAGTIGATVYYPKLEFCTDNGAMIAFAGAMRLESGESESSRLGKFTINARWDLEMQEIGREA</sequence>
<proteinExistence type="inferred from homology"/>
<evidence type="ECO:0000255" key="1">
    <source>
        <dbReference type="HAMAP-Rule" id="MF_01445"/>
    </source>
</evidence>
<name>TSAD_NITMU</name>
<keyword id="KW-0012">Acyltransferase</keyword>
<keyword id="KW-0963">Cytoplasm</keyword>
<keyword id="KW-0408">Iron</keyword>
<keyword id="KW-0479">Metal-binding</keyword>
<keyword id="KW-1185">Reference proteome</keyword>
<keyword id="KW-0808">Transferase</keyword>
<keyword id="KW-0819">tRNA processing</keyword>